<gene>
    <name evidence="1" type="primary">dnaA</name>
    <name type="ordered locus">MCCL_0001</name>
</gene>
<evidence type="ECO:0000255" key="1">
    <source>
        <dbReference type="HAMAP-Rule" id="MF_00377"/>
    </source>
</evidence>
<name>DNAA_MACCJ</name>
<reference key="1">
    <citation type="journal article" date="2009" name="J. Bacteriol.">
        <title>Complete genome sequence of Macrococcus caseolyticus strain JCSCS5402, reflecting the ancestral genome of the human-pathogenic staphylococci.</title>
        <authorList>
            <person name="Baba T."/>
            <person name="Kuwahara-Arai K."/>
            <person name="Uchiyama I."/>
            <person name="Takeuchi F."/>
            <person name="Ito T."/>
            <person name="Hiramatsu K."/>
        </authorList>
    </citation>
    <scope>NUCLEOTIDE SEQUENCE [LARGE SCALE GENOMIC DNA]</scope>
    <source>
        <strain>JCSC5402</strain>
    </source>
</reference>
<organism>
    <name type="scientific">Macrococcus caseolyticus (strain JCSC5402)</name>
    <name type="common">Macrococcoides caseolyticum</name>
    <dbReference type="NCBI Taxonomy" id="458233"/>
    <lineage>
        <taxon>Bacteria</taxon>
        <taxon>Bacillati</taxon>
        <taxon>Bacillota</taxon>
        <taxon>Bacilli</taxon>
        <taxon>Bacillales</taxon>
        <taxon>Staphylococcaceae</taxon>
        <taxon>Macrococcoides</taxon>
    </lineage>
</organism>
<keyword id="KW-0067">ATP-binding</keyword>
<keyword id="KW-0963">Cytoplasm</keyword>
<keyword id="KW-0235">DNA replication</keyword>
<keyword id="KW-0238">DNA-binding</keyword>
<keyword id="KW-0446">Lipid-binding</keyword>
<keyword id="KW-0547">Nucleotide-binding</keyword>
<keyword id="KW-1185">Reference proteome</keyword>
<feature type="chain" id="PRO_1000189801" description="Chromosomal replication initiator protein DnaA">
    <location>
        <begin position="1"/>
        <end position="445"/>
    </location>
</feature>
<feature type="region of interest" description="Domain I, interacts with DnaA modulators" evidence="1">
    <location>
        <begin position="1"/>
        <end position="72"/>
    </location>
</feature>
<feature type="region of interest" description="Domain II" evidence="1">
    <location>
        <begin position="72"/>
        <end position="107"/>
    </location>
</feature>
<feature type="region of interest" description="Domain III, AAA+ region" evidence="1">
    <location>
        <begin position="108"/>
        <end position="324"/>
    </location>
</feature>
<feature type="region of interest" description="Domain IV, binds dsDNA" evidence="1">
    <location>
        <begin position="325"/>
        <end position="445"/>
    </location>
</feature>
<feature type="binding site" evidence="1">
    <location>
        <position position="152"/>
    </location>
    <ligand>
        <name>ATP</name>
        <dbReference type="ChEBI" id="CHEBI:30616"/>
    </ligand>
</feature>
<feature type="binding site" evidence="1">
    <location>
        <position position="154"/>
    </location>
    <ligand>
        <name>ATP</name>
        <dbReference type="ChEBI" id="CHEBI:30616"/>
    </ligand>
</feature>
<feature type="binding site" evidence="1">
    <location>
        <position position="155"/>
    </location>
    <ligand>
        <name>ATP</name>
        <dbReference type="ChEBI" id="CHEBI:30616"/>
    </ligand>
</feature>
<feature type="binding site" evidence="1">
    <location>
        <position position="156"/>
    </location>
    <ligand>
        <name>ATP</name>
        <dbReference type="ChEBI" id="CHEBI:30616"/>
    </ligand>
</feature>
<sequence length="445" mass="50986">MSGIDTIWEKVLANIKHRLAPASYDTWFKETKIKVLNNHQVVIQAPTSFISEWLQTNYIDFIQEAFIEEIGEKLNIKVISSEDELMNNEKEAPVRKTQQTSQELLPNQLNTDNTFDTFVIGSGNRFSHAASLAVAEAPAKAYNPLFIYGGVGLGKTHLMHAIGHYVMEHKENAKVVYISSEKFMNEFINSIKDNKTEEFRSKYRNVDVLLIDDIQFLAGKESTQEEFFHTFNELHQNHKQIVISSDRAPKEIPTLEERLRTRFEWGLITDVTPPDLETRIAILRKKSEEENIDIPNEAMLYIATQIQSNIRELEGALTRVSAYSKLVNRELNSDLVAEALKDIIATSKPKKVTIKDIQLAVGEYYNVRLEDFSAKKRTKSIAFPRQIAMYLARELTDFSLPKIGEEFGGRDHTTVIHAHEKIKNQLETDESLKNELKNIEKDITS</sequence>
<proteinExistence type="inferred from homology"/>
<protein>
    <recommendedName>
        <fullName evidence="1">Chromosomal replication initiator protein DnaA</fullName>
    </recommendedName>
</protein>
<comment type="function">
    <text evidence="1">Plays an essential role in the initiation and regulation of chromosomal replication. ATP-DnaA binds to the origin of replication (oriC) to initiate formation of the DNA replication initiation complex once per cell cycle. Binds the DnaA box (a 9 base pair repeat at the origin) and separates the double-stranded (ds)DNA. Forms a right-handed helical filament on oriC DNA; dsDNA binds to the exterior of the filament while single-stranded (ss)DNA is stabiized in the filament's interior. The ATP-DnaA-oriC complex binds and stabilizes one strand of the AT-rich DNA unwinding element (DUE), permitting loading of DNA polymerase. After initiation quickly degrades to an ADP-DnaA complex that is not apt for DNA replication. Binds acidic phospholipids.</text>
</comment>
<comment type="subunit">
    <text evidence="1">Oligomerizes as a right-handed, spiral filament on DNA at oriC.</text>
</comment>
<comment type="subcellular location">
    <subcellularLocation>
        <location evidence="1">Cytoplasm</location>
    </subcellularLocation>
</comment>
<comment type="domain">
    <text evidence="1">Domain I is involved in oligomerization and binding regulators, domain II is flexibile and of varying length in different bacteria, domain III forms the AAA+ region, while domain IV binds dsDNA.</text>
</comment>
<comment type="similarity">
    <text evidence="1">Belongs to the DnaA family.</text>
</comment>
<dbReference type="EMBL" id="AP009484">
    <property type="protein sequence ID" value="BAH16708.1"/>
    <property type="molecule type" value="Genomic_DNA"/>
</dbReference>
<dbReference type="RefSeq" id="WP_012655912.1">
    <property type="nucleotide sequence ID" value="NC_011999.1"/>
</dbReference>
<dbReference type="SMR" id="B9E8Z7"/>
<dbReference type="STRING" id="458233.MCCL_0001"/>
<dbReference type="KEGG" id="mcl:MCCL_0001"/>
<dbReference type="eggNOG" id="COG0593">
    <property type="taxonomic scope" value="Bacteria"/>
</dbReference>
<dbReference type="HOGENOM" id="CLU_026910_3_1_9"/>
<dbReference type="OrthoDB" id="9807019at2"/>
<dbReference type="Proteomes" id="UP000001383">
    <property type="component" value="Chromosome"/>
</dbReference>
<dbReference type="GO" id="GO:0005737">
    <property type="term" value="C:cytoplasm"/>
    <property type="evidence" value="ECO:0007669"/>
    <property type="project" value="UniProtKB-SubCell"/>
</dbReference>
<dbReference type="GO" id="GO:0005886">
    <property type="term" value="C:plasma membrane"/>
    <property type="evidence" value="ECO:0007669"/>
    <property type="project" value="TreeGrafter"/>
</dbReference>
<dbReference type="GO" id="GO:0005524">
    <property type="term" value="F:ATP binding"/>
    <property type="evidence" value="ECO:0007669"/>
    <property type="project" value="UniProtKB-UniRule"/>
</dbReference>
<dbReference type="GO" id="GO:0016887">
    <property type="term" value="F:ATP hydrolysis activity"/>
    <property type="evidence" value="ECO:0007669"/>
    <property type="project" value="InterPro"/>
</dbReference>
<dbReference type="GO" id="GO:0003688">
    <property type="term" value="F:DNA replication origin binding"/>
    <property type="evidence" value="ECO:0007669"/>
    <property type="project" value="UniProtKB-UniRule"/>
</dbReference>
<dbReference type="GO" id="GO:0008289">
    <property type="term" value="F:lipid binding"/>
    <property type="evidence" value="ECO:0007669"/>
    <property type="project" value="UniProtKB-KW"/>
</dbReference>
<dbReference type="GO" id="GO:0006270">
    <property type="term" value="P:DNA replication initiation"/>
    <property type="evidence" value="ECO:0007669"/>
    <property type="project" value="UniProtKB-UniRule"/>
</dbReference>
<dbReference type="GO" id="GO:0006275">
    <property type="term" value="P:regulation of DNA replication"/>
    <property type="evidence" value="ECO:0007669"/>
    <property type="project" value="UniProtKB-UniRule"/>
</dbReference>
<dbReference type="CDD" id="cd00009">
    <property type="entry name" value="AAA"/>
    <property type="match status" value="1"/>
</dbReference>
<dbReference type="CDD" id="cd06571">
    <property type="entry name" value="Bac_DnaA_C"/>
    <property type="match status" value="1"/>
</dbReference>
<dbReference type="FunFam" id="1.10.1750.10:FF:000003">
    <property type="entry name" value="Chromosomal replication initiator protein DnaA"/>
    <property type="match status" value="1"/>
</dbReference>
<dbReference type="FunFam" id="1.10.8.60:FF:000003">
    <property type="entry name" value="Chromosomal replication initiator protein DnaA"/>
    <property type="match status" value="1"/>
</dbReference>
<dbReference type="FunFam" id="3.40.50.300:FF:000150">
    <property type="entry name" value="Chromosomal replication initiator protein DnaA"/>
    <property type="match status" value="1"/>
</dbReference>
<dbReference type="Gene3D" id="1.10.1750.10">
    <property type="match status" value="1"/>
</dbReference>
<dbReference type="Gene3D" id="1.10.8.60">
    <property type="match status" value="1"/>
</dbReference>
<dbReference type="Gene3D" id="3.30.300.180">
    <property type="match status" value="1"/>
</dbReference>
<dbReference type="Gene3D" id="3.40.50.300">
    <property type="entry name" value="P-loop containing nucleotide triphosphate hydrolases"/>
    <property type="match status" value="1"/>
</dbReference>
<dbReference type="HAMAP" id="MF_00377">
    <property type="entry name" value="DnaA_bact"/>
    <property type="match status" value="1"/>
</dbReference>
<dbReference type="InterPro" id="IPR003593">
    <property type="entry name" value="AAA+_ATPase"/>
</dbReference>
<dbReference type="InterPro" id="IPR001957">
    <property type="entry name" value="Chromosome_initiator_DnaA"/>
</dbReference>
<dbReference type="InterPro" id="IPR020591">
    <property type="entry name" value="Chromosome_initiator_DnaA-like"/>
</dbReference>
<dbReference type="InterPro" id="IPR018312">
    <property type="entry name" value="Chromosome_initiator_DnaA_CS"/>
</dbReference>
<dbReference type="InterPro" id="IPR013159">
    <property type="entry name" value="DnaA_C"/>
</dbReference>
<dbReference type="InterPro" id="IPR013317">
    <property type="entry name" value="DnaA_dom"/>
</dbReference>
<dbReference type="InterPro" id="IPR024633">
    <property type="entry name" value="DnaA_N_dom"/>
</dbReference>
<dbReference type="InterPro" id="IPR038454">
    <property type="entry name" value="DnaA_N_sf"/>
</dbReference>
<dbReference type="InterPro" id="IPR027417">
    <property type="entry name" value="P-loop_NTPase"/>
</dbReference>
<dbReference type="InterPro" id="IPR010921">
    <property type="entry name" value="Trp_repressor/repl_initiator"/>
</dbReference>
<dbReference type="NCBIfam" id="TIGR00362">
    <property type="entry name" value="DnaA"/>
    <property type="match status" value="1"/>
</dbReference>
<dbReference type="NCBIfam" id="NF010686">
    <property type="entry name" value="PRK14086.1"/>
    <property type="match status" value="1"/>
</dbReference>
<dbReference type="PANTHER" id="PTHR30050">
    <property type="entry name" value="CHROMOSOMAL REPLICATION INITIATOR PROTEIN DNAA"/>
    <property type="match status" value="1"/>
</dbReference>
<dbReference type="PANTHER" id="PTHR30050:SF2">
    <property type="entry name" value="CHROMOSOMAL REPLICATION INITIATOR PROTEIN DNAA"/>
    <property type="match status" value="1"/>
</dbReference>
<dbReference type="Pfam" id="PF00308">
    <property type="entry name" value="Bac_DnaA"/>
    <property type="match status" value="1"/>
</dbReference>
<dbReference type="Pfam" id="PF08299">
    <property type="entry name" value="Bac_DnaA_C"/>
    <property type="match status" value="1"/>
</dbReference>
<dbReference type="Pfam" id="PF11638">
    <property type="entry name" value="DnaA_N"/>
    <property type="match status" value="1"/>
</dbReference>
<dbReference type="PRINTS" id="PR00051">
    <property type="entry name" value="DNAA"/>
</dbReference>
<dbReference type="SMART" id="SM00382">
    <property type="entry name" value="AAA"/>
    <property type="match status" value="1"/>
</dbReference>
<dbReference type="SMART" id="SM00760">
    <property type="entry name" value="Bac_DnaA_C"/>
    <property type="match status" value="1"/>
</dbReference>
<dbReference type="SUPFAM" id="SSF52540">
    <property type="entry name" value="P-loop containing nucleoside triphosphate hydrolases"/>
    <property type="match status" value="1"/>
</dbReference>
<dbReference type="SUPFAM" id="SSF48295">
    <property type="entry name" value="TrpR-like"/>
    <property type="match status" value="1"/>
</dbReference>
<dbReference type="PROSITE" id="PS01008">
    <property type="entry name" value="DNAA"/>
    <property type="match status" value="1"/>
</dbReference>
<accession>B9E8Z7</accession>